<dbReference type="EMBL" id="AJ854042">
    <property type="protein sequence ID" value="CAH69419.1"/>
    <property type="molecule type" value="Genomic_DNA"/>
</dbReference>
<dbReference type="RefSeq" id="YP_001496957.1">
    <property type="nucleotide sequence ID" value="NC_009884.1"/>
</dbReference>
<dbReference type="SMR" id="Q573D7"/>
<dbReference type="KEGG" id="vg:5656082"/>
<dbReference type="Proteomes" id="UP000006364">
    <property type="component" value="Genome"/>
</dbReference>
<organism>
    <name type="scientific">Acidianus filamentous virus 2 (isolate Italy/Pozzuoli)</name>
    <name type="common">AFV-2</name>
    <dbReference type="NCBI Taxonomy" id="654910"/>
    <lineage>
        <taxon>Viruses</taxon>
        <taxon>Adnaviria</taxon>
        <taxon>Zilligvirae</taxon>
        <taxon>Taleaviricota</taxon>
        <taxon>Tokiviricetes</taxon>
        <taxon>Ligamenvirales</taxon>
        <taxon>Lipothrixviridae</taxon>
        <taxon>Deltalipothrixvirus</taxon>
        <taxon>Acidianus filamentous virus 2</taxon>
    </lineage>
</organism>
<keyword id="KW-1185">Reference proteome</keyword>
<name>Y238_AFV2P</name>
<accession>Q573D7</accession>
<sequence length="238" mass="27099">MTRVITFVGNVTLLSKVIVKNKLTDVYVDQSYLYKVSDNGVKLPSTNEKAIFFKQDDINIQNLVSEGDGEITKGVGEKVRFHFVDTGIPPFKTSPSLMYSDGSDNEIVEMINRRVRIAKLISLIVNEIDDDLMFIDSDITVNNIDALLYSMSNRTKIGTLCIPAIAKPYNFVIMFCASTNFYLPREMRNDLLNVIQRYIASAKYVNTPVDIFINRELGSTPITWFGVCHHKYDKEWCI</sequence>
<protein>
    <recommendedName>
        <fullName>Uncharacterized protein ORF238</fullName>
    </recommendedName>
</protein>
<organismHost>
    <name type="scientific">Acidianus sp. F28</name>
    <dbReference type="NCBI Taxonomy" id="315458"/>
</organismHost>
<reference key="1">
    <citation type="journal article" date="2005" name="J. Bacteriol.">
        <title>Structure and genome organization of AFV2, a novel archaeal lipothrixvirus with unusual terminal and core structures.</title>
        <authorList>
            <person name="Haring M."/>
            <person name="Vestergaard G."/>
            <person name="Brugger K."/>
            <person name="Rachel R."/>
            <person name="Garrett R.A."/>
            <person name="Prangishvili D."/>
        </authorList>
    </citation>
    <scope>NUCLEOTIDE SEQUENCE [GENOMIC DNA]</scope>
</reference>
<feature type="chain" id="PRO_0000384521" description="Uncharacterized protein ORF238">
    <location>
        <begin position="1"/>
        <end position="238"/>
    </location>
</feature>
<gene>
    <name type="ORF">ORF238</name>
</gene>
<proteinExistence type="predicted"/>